<dbReference type="EC" id="7.1.1.-" evidence="2"/>
<dbReference type="EMBL" id="CP000103">
    <property type="protein sequence ID" value="ABB74395.1"/>
    <property type="molecule type" value="Genomic_DNA"/>
</dbReference>
<dbReference type="RefSeq" id="WP_011380436.1">
    <property type="nucleotide sequence ID" value="NC_007614.1"/>
</dbReference>
<dbReference type="SMR" id="Q2YA26"/>
<dbReference type="STRING" id="323848.Nmul_A1092"/>
<dbReference type="KEGG" id="nmu:Nmul_A1092"/>
<dbReference type="eggNOG" id="COG0377">
    <property type="taxonomic scope" value="Bacteria"/>
</dbReference>
<dbReference type="HOGENOM" id="CLU_055737_7_3_4"/>
<dbReference type="OrthoDB" id="9786737at2"/>
<dbReference type="Proteomes" id="UP000002718">
    <property type="component" value="Chromosome"/>
</dbReference>
<dbReference type="GO" id="GO:0005886">
    <property type="term" value="C:plasma membrane"/>
    <property type="evidence" value="ECO:0007669"/>
    <property type="project" value="UniProtKB-SubCell"/>
</dbReference>
<dbReference type="GO" id="GO:0045271">
    <property type="term" value="C:respiratory chain complex I"/>
    <property type="evidence" value="ECO:0007669"/>
    <property type="project" value="TreeGrafter"/>
</dbReference>
<dbReference type="GO" id="GO:0051539">
    <property type="term" value="F:4 iron, 4 sulfur cluster binding"/>
    <property type="evidence" value="ECO:0007669"/>
    <property type="project" value="UniProtKB-KW"/>
</dbReference>
<dbReference type="GO" id="GO:0005506">
    <property type="term" value="F:iron ion binding"/>
    <property type="evidence" value="ECO:0007669"/>
    <property type="project" value="UniProtKB-UniRule"/>
</dbReference>
<dbReference type="GO" id="GO:0008137">
    <property type="term" value="F:NADH dehydrogenase (ubiquinone) activity"/>
    <property type="evidence" value="ECO:0007669"/>
    <property type="project" value="InterPro"/>
</dbReference>
<dbReference type="GO" id="GO:0050136">
    <property type="term" value="F:NADH:ubiquinone reductase (non-electrogenic) activity"/>
    <property type="evidence" value="ECO:0007669"/>
    <property type="project" value="UniProtKB-UniRule"/>
</dbReference>
<dbReference type="GO" id="GO:0048038">
    <property type="term" value="F:quinone binding"/>
    <property type="evidence" value="ECO:0007669"/>
    <property type="project" value="UniProtKB-KW"/>
</dbReference>
<dbReference type="GO" id="GO:0009060">
    <property type="term" value="P:aerobic respiration"/>
    <property type="evidence" value="ECO:0007669"/>
    <property type="project" value="TreeGrafter"/>
</dbReference>
<dbReference type="GO" id="GO:0015990">
    <property type="term" value="P:electron transport coupled proton transport"/>
    <property type="evidence" value="ECO:0007669"/>
    <property type="project" value="TreeGrafter"/>
</dbReference>
<dbReference type="FunFam" id="3.40.50.12280:FF:000001">
    <property type="entry name" value="NADH-quinone oxidoreductase subunit B 2"/>
    <property type="match status" value="1"/>
</dbReference>
<dbReference type="Gene3D" id="3.40.50.12280">
    <property type="match status" value="1"/>
</dbReference>
<dbReference type="HAMAP" id="MF_01356">
    <property type="entry name" value="NDH1_NuoB"/>
    <property type="match status" value="1"/>
</dbReference>
<dbReference type="InterPro" id="IPR006137">
    <property type="entry name" value="NADH_UbQ_OxRdtase-like_20kDa"/>
</dbReference>
<dbReference type="InterPro" id="IPR006138">
    <property type="entry name" value="NADH_UQ_OxRdtase_20Kd_su"/>
</dbReference>
<dbReference type="NCBIfam" id="TIGR01957">
    <property type="entry name" value="nuoB_fam"/>
    <property type="match status" value="1"/>
</dbReference>
<dbReference type="NCBIfam" id="NF005012">
    <property type="entry name" value="PRK06411.1"/>
    <property type="match status" value="1"/>
</dbReference>
<dbReference type="PANTHER" id="PTHR11995">
    <property type="entry name" value="NADH DEHYDROGENASE"/>
    <property type="match status" value="1"/>
</dbReference>
<dbReference type="PANTHER" id="PTHR11995:SF14">
    <property type="entry name" value="NADH DEHYDROGENASE [UBIQUINONE] IRON-SULFUR PROTEIN 7, MITOCHONDRIAL"/>
    <property type="match status" value="1"/>
</dbReference>
<dbReference type="Pfam" id="PF01058">
    <property type="entry name" value="Oxidored_q6"/>
    <property type="match status" value="1"/>
</dbReference>
<dbReference type="SUPFAM" id="SSF56770">
    <property type="entry name" value="HydA/Nqo6-like"/>
    <property type="match status" value="1"/>
</dbReference>
<dbReference type="PROSITE" id="PS01150">
    <property type="entry name" value="COMPLEX1_20K"/>
    <property type="match status" value="1"/>
</dbReference>
<organism>
    <name type="scientific">Nitrosospira multiformis (strain ATCC 25196 / NCIMB 11849 / C 71)</name>
    <dbReference type="NCBI Taxonomy" id="323848"/>
    <lineage>
        <taxon>Bacteria</taxon>
        <taxon>Pseudomonadati</taxon>
        <taxon>Pseudomonadota</taxon>
        <taxon>Betaproteobacteria</taxon>
        <taxon>Nitrosomonadales</taxon>
        <taxon>Nitrosomonadaceae</taxon>
        <taxon>Nitrosospira</taxon>
    </lineage>
</organism>
<evidence type="ECO:0000250" key="1"/>
<evidence type="ECO:0000255" key="2">
    <source>
        <dbReference type="HAMAP-Rule" id="MF_01356"/>
    </source>
</evidence>
<accession>Q2YA26</accession>
<comment type="function">
    <text evidence="1">NDH-1 shuttles electrons from NADH, via FMN and iron-sulfur (Fe-S) centers, to quinones in the respiratory chain. Couples the redox reaction to proton translocation (for every two electrons transferred, four hydrogen ions are translocated across the cytoplasmic membrane), and thus conserves the redox energy in a proton gradient (By similarity).</text>
</comment>
<comment type="catalytic activity">
    <reaction evidence="2">
        <text>a quinone + NADH + 5 H(+)(in) = a quinol + NAD(+) + 4 H(+)(out)</text>
        <dbReference type="Rhea" id="RHEA:57888"/>
        <dbReference type="ChEBI" id="CHEBI:15378"/>
        <dbReference type="ChEBI" id="CHEBI:24646"/>
        <dbReference type="ChEBI" id="CHEBI:57540"/>
        <dbReference type="ChEBI" id="CHEBI:57945"/>
        <dbReference type="ChEBI" id="CHEBI:132124"/>
    </reaction>
</comment>
<comment type="cofactor">
    <cofactor evidence="2">
        <name>[4Fe-4S] cluster</name>
        <dbReference type="ChEBI" id="CHEBI:49883"/>
    </cofactor>
    <text evidence="2">Binds 1 [4Fe-4S] cluster.</text>
</comment>
<comment type="subunit">
    <text evidence="2">NDH-1 is composed of 14 different subunits. Subunits NuoB, C, D, E, F, and G constitute the peripheral sector of the complex.</text>
</comment>
<comment type="subcellular location">
    <subcellularLocation>
        <location evidence="2">Cell inner membrane</location>
        <topology evidence="2">Peripheral membrane protein</topology>
        <orientation evidence="2">Cytoplasmic side</orientation>
    </subcellularLocation>
</comment>
<comment type="similarity">
    <text evidence="2">Belongs to the complex I 20 kDa subunit family.</text>
</comment>
<keyword id="KW-0004">4Fe-4S</keyword>
<keyword id="KW-0997">Cell inner membrane</keyword>
<keyword id="KW-1003">Cell membrane</keyword>
<keyword id="KW-0408">Iron</keyword>
<keyword id="KW-0411">Iron-sulfur</keyword>
<keyword id="KW-0472">Membrane</keyword>
<keyword id="KW-0479">Metal-binding</keyword>
<keyword id="KW-0520">NAD</keyword>
<keyword id="KW-0874">Quinone</keyword>
<keyword id="KW-1185">Reference proteome</keyword>
<keyword id="KW-1278">Translocase</keyword>
<keyword id="KW-0813">Transport</keyword>
<keyword id="KW-0830">Ubiquinone</keyword>
<reference key="1">
    <citation type="submission" date="2005-08" db="EMBL/GenBank/DDBJ databases">
        <title>Complete sequence of chromosome 1 of Nitrosospira multiformis ATCC 25196.</title>
        <authorList>
            <person name="Copeland A."/>
            <person name="Lucas S."/>
            <person name="Lapidus A."/>
            <person name="Barry K."/>
            <person name="Detter J.C."/>
            <person name="Glavina T."/>
            <person name="Hammon N."/>
            <person name="Israni S."/>
            <person name="Pitluck S."/>
            <person name="Chain P."/>
            <person name="Malfatti S."/>
            <person name="Shin M."/>
            <person name="Vergez L."/>
            <person name="Schmutz J."/>
            <person name="Larimer F."/>
            <person name="Land M."/>
            <person name="Hauser L."/>
            <person name="Kyrpides N."/>
            <person name="Lykidis A."/>
            <person name="Richardson P."/>
        </authorList>
    </citation>
    <scope>NUCLEOTIDE SEQUENCE [LARGE SCALE GENOMIC DNA]</scope>
    <source>
        <strain>ATCC 25196 / NCIMB 11849 / C 71</strain>
    </source>
</reference>
<protein>
    <recommendedName>
        <fullName evidence="2">NADH-quinone oxidoreductase subunit B 2</fullName>
        <ecNumber evidence="2">7.1.1.-</ecNumber>
    </recommendedName>
    <alternativeName>
        <fullName evidence="2">NADH dehydrogenase I subunit B 2</fullName>
    </alternativeName>
    <alternativeName>
        <fullName evidence="2">NDH-1 subunit B 2</fullName>
    </alternativeName>
</protein>
<name>NUOB2_NITMU</name>
<gene>
    <name evidence="2" type="primary">nuoB2</name>
    <name type="ordered locus">Nmul_A1092</name>
</gene>
<sequence>MSTNGVMEKGFVTTSLDSVINWGRTGSMWPMTFGLACCAVEMMQAGASRYDLDRFGIVFRPSPRQSDVMIVAGTLCNKMAPALRKVYDQMAEPRWVISMGSCANGGGYYHYSYSVVRGCDRIVPVDIYVPGCPPTAEALLYGIIQLQNKIHRTNTIAR</sequence>
<feature type="chain" id="PRO_0000358435" description="NADH-quinone oxidoreductase subunit B 2">
    <location>
        <begin position="1"/>
        <end position="158"/>
    </location>
</feature>
<feature type="binding site" evidence="2">
    <location>
        <position position="37"/>
    </location>
    <ligand>
        <name>[4Fe-4S] cluster</name>
        <dbReference type="ChEBI" id="CHEBI:49883"/>
    </ligand>
</feature>
<feature type="binding site" evidence="2">
    <location>
        <position position="38"/>
    </location>
    <ligand>
        <name>[4Fe-4S] cluster</name>
        <dbReference type="ChEBI" id="CHEBI:49883"/>
    </ligand>
</feature>
<feature type="binding site" evidence="2">
    <location>
        <position position="102"/>
    </location>
    <ligand>
        <name>[4Fe-4S] cluster</name>
        <dbReference type="ChEBI" id="CHEBI:49883"/>
    </ligand>
</feature>
<feature type="binding site" evidence="2">
    <location>
        <position position="132"/>
    </location>
    <ligand>
        <name>[4Fe-4S] cluster</name>
        <dbReference type="ChEBI" id="CHEBI:49883"/>
    </ligand>
</feature>
<proteinExistence type="inferred from homology"/>